<gene>
    <name type="primary">Igsf10</name>
</gene>
<comment type="function">
    <text evidence="1 6">Involved in the control of early migration of neurons expressing gonadotropin-releasing hormone (GNRH neurons) (PubMed:27137492). May be involved in the maintenance of osteochondroprogenitor cells pool (By similarity).</text>
</comment>
<comment type="subcellular location">
    <subcellularLocation>
        <location evidence="2">Secreted</location>
    </subcellularLocation>
</comment>
<comment type="tissue specificity">
    <text evidence="6">In the embryo, expressed in the nasal mesenchyme.</text>
</comment>
<comment type="sequence caution" evidence="7">
    <conflict type="frameshift">
        <sequence resource="EMBL" id="AK081990"/>
    </conflict>
</comment>
<reference key="1">
    <citation type="journal article" date="2009" name="PLoS Biol.">
        <title>Lineage-specific biology revealed by a finished genome assembly of the mouse.</title>
        <authorList>
            <person name="Church D.M."/>
            <person name="Goodstadt L."/>
            <person name="Hillier L.W."/>
            <person name="Zody M.C."/>
            <person name="Goldstein S."/>
            <person name="She X."/>
            <person name="Bult C.J."/>
            <person name="Agarwala R."/>
            <person name="Cherry J.L."/>
            <person name="DiCuccio M."/>
            <person name="Hlavina W."/>
            <person name="Kapustin Y."/>
            <person name="Meric P."/>
            <person name="Maglott D."/>
            <person name="Birtle Z."/>
            <person name="Marques A.C."/>
            <person name="Graves T."/>
            <person name="Zhou S."/>
            <person name="Teague B."/>
            <person name="Potamousis K."/>
            <person name="Churas C."/>
            <person name="Place M."/>
            <person name="Herschleb J."/>
            <person name="Runnheim R."/>
            <person name="Forrest D."/>
            <person name="Amos-Landgraf J."/>
            <person name="Schwartz D.C."/>
            <person name="Cheng Z."/>
            <person name="Lindblad-Toh K."/>
            <person name="Eichler E.E."/>
            <person name="Ponting C.P."/>
        </authorList>
    </citation>
    <scope>NUCLEOTIDE SEQUENCE [LARGE SCALE GENOMIC DNA]</scope>
    <source>
        <strain>C57BL/6J</strain>
    </source>
</reference>
<reference key="2">
    <citation type="journal article" date="2005" name="Science">
        <title>The transcriptional landscape of the mammalian genome.</title>
        <authorList>
            <person name="Carninci P."/>
            <person name="Kasukawa T."/>
            <person name="Katayama S."/>
            <person name="Gough J."/>
            <person name="Frith M.C."/>
            <person name="Maeda N."/>
            <person name="Oyama R."/>
            <person name="Ravasi T."/>
            <person name="Lenhard B."/>
            <person name="Wells C."/>
            <person name="Kodzius R."/>
            <person name="Shimokawa K."/>
            <person name="Bajic V.B."/>
            <person name="Brenner S.E."/>
            <person name="Batalov S."/>
            <person name="Forrest A.R."/>
            <person name="Zavolan M."/>
            <person name="Davis M.J."/>
            <person name="Wilming L.G."/>
            <person name="Aidinis V."/>
            <person name="Allen J.E."/>
            <person name="Ambesi-Impiombato A."/>
            <person name="Apweiler R."/>
            <person name="Aturaliya R.N."/>
            <person name="Bailey T.L."/>
            <person name="Bansal M."/>
            <person name="Baxter L."/>
            <person name="Beisel K.W."/>
            <person name="Bersano T."/>
            <person name="Bono H."/>
            <person name="Chalk A.M."/>
            <person name="Chiu K.P."/>
            <person name="Choudhary V."/>
            <person name="Christoffels A."/>
            <person name="Clutterbuck D.R."/>
            <person name="Crowe M.L."/>
            <person name="Dalla E."/>
            <person name="Dalrymple B.P."/>
            <person name="de Bono B."/>
            <person name="Della Gatta G."/>
            <person name="di Bernardo D."/>
            <person name="Down T."/>
            <person name="Engstrom P."/>
            <person name="Fagiolini M."/>
            <person name="Faulkner G."/>
            <person name="Fletcher C.F."/>
            <person name="Fukushima T."/>
            <person name="Furuno M."/>
            <person name="Futaki S."/>
            <person name="Gariboldi M."/>
            <person name="Georgii-Hemming P."/>
            <person name="Gingeras T.R."/>
            <person name="Gojobori T."/>
            <person name="Green R.E."/>
            <person name="Gustincich S."/>
            <person name="Harbers M."/>
            <person name="Hayashi Y."/>
            <person name="Hensch T.K."/>
            <person name="Hirokawa N."/>
            <person name="Hill D."/>
            <person name="Huminiecki L."/>
            <person name="Iacono M."/>
            <person name="Ikeo K."/>
            <person name="Iwama A."/>
            <person name="Ishikawa T."/>
            <person name="Jakt M."/>
            <person name="Kanapin A."/>
            <person name="Katoh M."/>
            <person name="Kawasawa Y."/>
            <person name="Kelso J."/>
            <person name="Kitamura H."/>
            <person name="Kitano H."/>
            <person name="Kollias G."/>
            <person name="Krishnan S.P."/>
            <person name="Kruger A."/>
            <person name="Kummerfeld S.K."/>
            <person name="Kurochkin I.V."/>
            <person name="Lareau L.F."/>
            <person name="Lazarevic D."/>
            <person name="Lipovich L."/>
            <person name="Liu J."/>
            <person name="Liuni S."/>
            <person name="McWilliam S."/>
            <person name="Madan Babu M."/>
            <person name="Madera M."/>
            <person name="Marchionni L."/>
            <person name="Matsuda H."/>
            <person name="Matsuzawa S."/>
            <person name="Miki H."/>
            <person name="Mignone F."/>
            <person name="Miyake S."/>
            <person name="Morris K."/>
            <person name="Mottagui-Tabar S."/>
            <person name="Mulder N."/>
            <person name="Nakano N."/>
            <person name="Nakauchi H."/>
            <person name="Ng P."/>
            <person name="Nilsson R."/>
            <person name="Nishiguchi S."/>
            <person name="Nishikawa S."/>
            <person name="Nori F."/>
            <person name="Ohara O."/>
            <person name="Okazaki Y."/>
            <person name="Orlando V."/>
            <person name="Pang K.C."/>
            <person name="Pavan W.J."/>
            <person name="Pavesi G."/>
            <person name="Pesole G."/>
            <person name="Petrovsky N."/>
            <person name="Piazza S."/>
            <person name="Reed J."/>
            <person name="Reid J.F."/>
            <person name="Ring B.Z."/>
            <person name="Ringwald M."/>
            <person name="Rost B."/>
            <person name="Ruan Y."/>
            <person name="Salzberg S.L."/>
            <person name="Sandelin A."/>
            <person name="Schneider C."/>
            <person name="Schoenbach C."/>
            <person name="Sekiguchi K."/>
            <person name="Semple C.A."/>
            <person name="Seno S."/>
            <person name="Sessa L."/>
            <person name="Sheng Y."/>
            <person name="Shibata Y."/>
            <person name="Shimada H."/>
            <person name="Shimada K."/>
            <person name="Silva D."/>
            <person name="Sinclair B."/>
            <person name="Sperling S."/>
            <person name="Stupka E."/>
            <person name="Sugiura K."/>
            <person name="Sultana R."/>
            <person name="Takenaka Y."/>
            <person name="Taki K."/>
            <person name="Tammoja K."/>
            <person name="Tan S.L."/>
            <person name="Tang S."/>
            <person name="Taylor M.S."/>
            <person name="Tegner J."/>
            <person name="Teichmann S.A."/>
            <person name="Ueda H.R."/>
            <person name="van Nimwegen E."/>
            <person name="Verardo R."/>
            <person name="Wei C.L."/>
            <person name="Yagi K."/>
            <person name="Yamanishi H."/>
            <person name="Zabarovsky E."/>
            <person name="Zhu S."/>
            <person name="Zimmer A."/>
            <person name="Hide W."/>
            <person name="Bult C."/>
            <person name="Grimmond S.M."/>
            <person name="Teasdale R.D."/>
            <person name="Liu E.T."/>
            <person name="Brusic V."/>
            <person name="Quackenbush J."/>
            <person name="Wahlestedt C."/>
            <person name="Mattick J.S."/>
            <person name="Hume D.A."/>
            <person name="Kai C."/>
            <person name="Sasaki D."/>
            <person name="Tomaru Y."/>
            <person name="Fukuda S."/>
            <person name="Kanamori-Katayama M."/>
            <person name="Suzuki M."/>
            <person name="Aoki J."/>
            <person name="Arakawa T."/>
            <person name="Iida J."/>
            <person name="Imamura K."/>
            <person name="Itoh M."/>
            <person name="Kato T."/>
            <person name="Kawaji H."/>
            <person name="Kawagashira N."/>
            <person name="Kawashima T."/>
            <person name="Kojima M."/>
            <person name="Kondo S."/>
            <person name="Konno H."/>
            <person name="Nakano K."/>
            <person name="Ninomiya N."/>
            <person name="Nishio T."/>
            <person name="Okada M."/>
            <person name="Plessy C."/>
            <person name="Shibata K."/>
            <person name="Shiraki T."/>
            <person name="Suzuki S."/>
            <person name="Tagami M."/>
            <person name="Waki K."/>
            <person name="Watahiki A."/>
            <person name="Okamura-Oho Y."/>
            <person name="Suzuki H."/>
            <person name="Kawai J."/>
            <person name="Hayashizaki Y."/>
        </authorList>
    </citation>
    <scope>NUCLEOTIDE SEQUENCE [LARGE SCALE MRNA] OF 1-1196 AND 1297-2594</scope>
    <source>
        <strain>C57BL/6J</strain>
        <tissue>Head</tissue>
        <tissue>Ovary</tissue>
    </source>
</reference>
<reference key="3">
    <citation type="journal article" date="2016" name="EMBO Mol. Med.">
        <title>IGSF10 mutations dysregulate gonadotropin-releasing hormone neuronal migration resulting in delayed puberty.</title>
        <authorList>
            <person name="Howard S.R."/>
            <person name="Guasti L."/>
            <person name="Ruiz-Babot G."/>
            <person name="Mancini A."/>
            <person name="David A."/>
            <person name="Storr H.L."/>
            <person name="Metherell L.A."/>
            <person name="Sternberg M.J."/>
            <person name="Cabrera C.P."/>
            <person name="Warren H.R."/>
            <person name="Barnes M.R."/>
            <person name="Quinton R."/>
            <person name="de Roux N."/>
            <person name="Young J."/>
            <person name="Guiochon-Mantel A."/>
            <person name="Wehkalampi K."/>
            <person name="Andre V."/>
            <person name="Gothilf Y."/>
            <person name="Cariboni A."/>
            <person name="Dunkel L."/>
        </authorList>
    </citation>
    <scope>TISSUE SPECIFICITY</scope>
    <scope>FUNCTION</scope>
</reference>
<sequence>MQKRGREVSCLLISLTAICLVVTPGSRVCPRRCACYVPTEVHCTFRYLTSIPDGIPANVERVNLGYNSLTRLTENDFSGLSRLELLMLHSNGIHRVSDKTFSGLQSLQVLKMSYNKVQIIEKDTLYGLRSLTRLHLDHNNIEFINPEAFYGLTLLRLVHLEGNRLTKLHPDTFVSLSYLQIFKTSFIKYLYLSDNFLTSLPKEMVSSMPNLESLYLHGNPWTCDCHLKWLSEWMQGNPDIIKCKKERIPSSPQQCPLCMNPRISKGRSIAMVPSGSFLCTKPTIDPSLKSKSLGIQEDNGSASVSPQDFIEPFGSLSLNMTDLSGNKANVICSIQKPSRTLPIAFTEENDYIMLNMSFSTNLVCSVNYNHIQPVWQLLALYSDSPLILERKPQHTETPLLSPKYQQVALRPEDTFTNIEADFKADPFWFQQEKISLQLNRTATTLSTLQIQFSTDAQITLPKAEMRPVKRKWTMILMMNNTRLEHTVLVGGTIALDCPGKGDPSPHLEWVLADGSKVRAPYVSEDGRILIDKKGKLELQMADTFDAGLYHCISTNDADADILTYRITVVEPYVENKHENGALHTVIMGEILDLPCLSTGIPDASISWILPRNTVFSQSSRDMQILNNGTLRILQATPKDQGHYRCVAANPSGADFSSFQVSVQMKGQRTIEHDRDIDGSGLEEPKPSVLLKQPPSLKLPASSLTGTEAGKQVSGIHKKNKHRDLTHRRRGDSTLRRFREHRRQLPLSARRIDPQHWAALLEKAKKNSVLRKQENTTVKPTPLAIPLVELAGEEKDASGLTPPDEEFTVLKTKAFGVPERSPTADSRPVNHGFVTSSASGTEVSSTVNPQTLLPTHLPDFKLFNVVDSAAVSKSMNRPVTSKIEDTTHQNPIIIFPSVAEIQDSAQVGRTSSQSAHPATGGAMATYGYTTMLSSFTNKANTVLQSANPTESYGPQIPLTEVSRVSSNNSLAHTTKDPGFSKRPSDSHTTAPSLFQTPRNNSTGNVGRERTIWSRGRAISPYRTPVLRRHRHRIVRPALKGPANRNISQVSATEPPGMCRTCSSTERLTMATAALSVTGSSHTTLPKANNVGIISEESTTVVKKPSLLLKNKQDVDIETITTTINYFRSESTHMTPTEASMISAPTSISLGKTPIDTSGHLSMPRTIQAGTDLVVTPPLSSPLSQPSIPTKATSTKLSRRKIPWHPIFANNHNKEGMLKNLHQFGLQKNTATKPPEKAPLLPTDHGSSSPSTTLLASLTPAQSATMAATRRNGTEVQGARSLSAGKEQPFINSFLVLPSTTRKRSSTLSFLSVETPTVTTPPVIASAIISETQEVRSKKAKDQTKGSLKNRKGPTITPRQISGYSTYSVPTTTDTPLAFSHSPGKVTGRTVSTAAPHSAASLLGITELPQKCTHTSGNITASETTLLSKSQESTAMKRASATPPLLSSGAPRMPTPSPPPFTKVVVTDSEVPAVFKMMSNRMVTIYESSRHDIDLQQPSAEASPNPEILTGSTDFPLSSLLTSTPMPAPRVDKPQDSQWKPSPWPENKFQLRSYSETIEKGKRPEISLSPHLSFPEASTHALHWNAQRHAEKSVFDKKPAQNPTSKHLPYDSLPKTILKKPRIIGGKAASFTVPTNSDVLLPCEAVGDPKPTIHWTRVSSGREISRGIQKTRFHVLPNGTLSIQRVSIQDRGQYLCAASNPLGVDHLHVTLSVVSYPARILESHVKEITAHSGSTVKLKCRVEGMPRPTISWILANQTVVSETPEGSRKVWVTPDGTLIIHNLSLYDRGFYKCVANNPSGQDSLLVKIQVITAPPVIIEQKRQAIVGVLGESLKLPCTAKGTPQPSVHWVLYDGTELKPLQLTHSRFFLYPNGTLYIRNIVSSVRGTYECIATSSSGSERRVVILRVEEQETVPRIETASQKWTEVNLGEKLLLNCSATGDPKPTIIWKLPSKVVIDQWHRMGSRIHVYPNGSLVIGSVTEKDGGDYLCVARNKMGDDLVLMHVRLRLTPAKIEHKQHFKKQVLHGKDFQVDCKASGSPVPEVSWSLPDGTVVNNVAQADDSGYRTKRYTLFHNGTLYFNKVGMAEEGDYICSAQNTLGKDEMKVHLTVLTAIPRIRQNYRSNVRIKAGDTAVLDCEVTGEPKPNVFWLLPSNNVISFSNDRFIFHANGTLSINKVKPLDSGKYVCVAQNPSGDDTKTYKLDIVSRPPLINGLYANKTVIKATAIQHSKKHLDCRADGVPPPQITWIMPDNIFLTAPYYGGRITVHQNGTLEIRNIRLSDSADFTCVVRSEGGESVLVVQLKVLEMLRRPTFRNPFNEKVVAQVGKPVAMNCSVDGNPTPEIIWILPDGTQFANGPQNSPYLMASNGSLIVYKATRNKSGKYRCTARNKVGYIEKLILLEIGQKPVILTYEPGMIKSAGGESLSLHCVSDGIPKPNVKWTTPGGLVIDRPQVGGKYILHENGTLVIKETTAHDRGNYICKAQNSVGQAVISVPVTIVAYPPRIINYLPRSMLRRTGEAMQLHCVALGVPKPQITWETPGYSLLSTATERRPHRSEMLPLQGTLVIQNLRASDSGVYKCRAQNVLGADYATTYIQVL</sequence>
<dbReference type="EMBL" id="AC122038">
    <property type="status" value="NOT_ANNOTATED_CDS"/>
    <property type="molecule type" value="Genomic_DNA"/>
</dbReference>
<dbReference type="EMBL" id="AK143421">
    <property type="protein sequence ID" value="BAE25371.1"/>
    <property type="molecule type" value="mRNA"/>
</dbReference>
<dbReference type="EMBL" id="AC135238">
    <property type="status" value="NOT_ANNOTATED_CDS"/>
    <property type="molecule type" value="Genomic_DNA"/>
</dbReference>
<dbReference type="EMBL" id="AK132367">
    <property type="protein sequence ID" value="BAE21129.1"/>
    <property type="molecule type" value="mRNA"/>
</dbReference>
<dbReference type="EMBL" id="AK081990">
    <property type="status" value="NOT_ANNOTATED_CDS"/>
    <property type="molecule type" value="mRNA"/>
</dbReference>
<dbReference type="CCDS" id="CCDS50915.1"/>
<dbReference type="RefSeq" id="NP_001156356.1">
    <property type="nucleotide sequence ID" value="NM_001162884.1"/>
</dbReference>
<dbReference type="RefSeq" id="XP_006501528.1">
    <property type="nucleotide sequence ID" value="XM_006501465.5"/>
</dbReference>
<dbReference type="RefSeq" id="XP_006501529.1">
    <property type="nucleotide sequence ID" value="XM_006501466.5"/>
</dbReference>
<dbReference type="RefSeq" id="XP_006501530.1">
    <property type="nucleotide sequence ID" value="XM_006501467.5"/>
</dbReference>
<dbReference type="RefSeq" id="XP_011238419.1">
    <property type="nucleotide sequence ID" value="XM_011240117.4"/>
</dbReference>
<dbReference type="SMR" id="Q3V1M1"/>
<dbReference type="BioGRID" id="232370">
    <property type="interactions" value="1"/>
</dbReference>
<dbReference type="FunCoup" id="Q3V1M1">
    <property type="interactions" value="352"/>
</dbReference>
<dbReference type="STRING" id="10090.ENSMUSP00000037246"/>
<dbReference type="GlyCosmos" id="Q3V1M1">
    <property type="glycosylation" value="9 sites, No reported glycans"/>
</dbReference>
<dbReference type="GlyGen" id="Q3V1M1">
    <property type="glycosylation" value="18 sites, 5 N-linked glycans (10 sites), 1 O-linked glycan (1 site)"/>
</dbReference>
<dbReference type="iPTMnet" id="Q3V1M1"/>
<dbReference type="PhosphoSitePlus" id="Q3V1M1"/>
<dbReference type="jPOST" id="Q3V1M1"/>
<dbReference type="PaxDb" id="10090-ENSMUSP00000037246"/>
<dbReference type="PeptideAtlas" id="Q3V1M1"/>
<dbReference type="ProteomicsDB" id="267204"/>
<dbReference type="Pumba" id="Q3V1M1"/>
<dbReference type="Antibodypedia" id="2541">
    <property type="antibodies" value="62 antibodies from 15 providers"/>
</dbReference>
<dbReference type="Ensembl" id="ENSMUST00000039419.12">
    <property type="protein sequence ID" value="ENSMUSP00000037246.7"/>
    <property type="gene ID" value="ENSMUSG00000036334.13"/>
</dbReference>
<dbReference type="Ensembl" id="ENSMUST00000193455.6">
    <property type="protein sequence ID" value="ENSMUSP00000141971.2"/>
    <property type="gene ID" value="ENSMUSG00000036334.13"/>
</dbReference>
<dbReference type="Ensembl" id="ENSMUST00000194546.6">
    <property type="protein sequence ID" value="ENSMUSP00000141391.2"/>
    <property type="gene ID" value="ENSMUSG00000036334.13"/>
</dbReference>
<dbReference type="GeneID" id="242050"/>
<dbReference type="KEGG" id="mmu:242050"/>
<dbReference type="UCSC" id="uc008piu.2">
    <property type="organism name" value="mouse"/>
</dbReference>
<dbReference type="AGR" id="MGI:1923481"/>
<dbReference type="CTD" id="285313"/>
<dbReference type="MGI" id="MGI:1923481">
    <property type="gene designation" value="Igsf10"/>
</dbReference>
<dbReference type="VEuPathDB" id="HostDB:ENSMUSG00000036334"/>
<dbReference type="eggNOG" id="KOG0619">
    <property type="taxonomic scope" value="Eukaryota"/>
</dbReference>
<dbReference type="GeneTree" id="ENSGT00940000158290"/>
<dbReference type="HOGENOM" id="CLU_000580_0_0_1"/>
<dbReference type="InParanoid" id="Q3V1M1"/>
<dbReference type="OMA" id="VTWIMPD"/>
<dbReference type="OrthoDB" id="10062932at2759"/>
<dbReference type="PhylomeDB" id="Q3V1M1"/>
<dbReference type="TreeFam" id="TF326318"/>
<dbReference type="BioGRID-ORCS" id="242050">
    <property type="hits" value="2 hits in 78 CRISPR screens"/>
</dbReference>
<dbReference type="ChiTaRS" id="Igsf10">
    <property type="organism name" value="mouse"/>
</dbReference>
<dbReference type="PRO" id="PR:Q3V1M1"/>
<dbReference type="Proteomes" id="UP000000589">
    <property type="component" value="Chromosome 3"/>
</dbReference>
<dbReference type="RNAct" id="Q3V1M1">
    <property type="molecule type" value="protein"/>
</dbReference>
<dbReference type="Bgee" id="ENSMUSG00000036334">
    <property type="expression patterns" value="Expressed in skin epidermis and 110 other cell types or tissues"/>
</dbReference>
<dbReference type="ExpressionAtlas" id="Q3V1M1">
    <property type="expression patterns" value="baseline and differential"/>
</dbReference>
<dbReference type="GO" id="GO:0005576">
    <property type="term" value="C:extracellular region"/>
    <property type="evidence" value="ECO:0000250"/>
    <property type="project" value="UniProtKB"/>
</dbReference>
<dbReference type="GO" id="GO:0001503">
    <property type="term" value="P:ossification"/>
    <property type="evidence" value="ECO:0000266"/>
    <property type="project" value="MGI"/>
</dbReference>
<dbReference type="GO" id="GO:2001222">
    <property type="term" value="P:regulation of neuron migration"/>
    <property type="evidence" value="ECO:0000315"/>
    <property type="project" value="UniProtKB"/>
</dbReference>
<dbReference type="CDD" id="cd00096">
    <property type="entry name" value="Ig"/>
    <property type="match status" value="2"/>
</dbReference>
<dbReference type="FunFam" id="2.60.40.10:FF:000621">
    <property type="entry name" value="Immunoglobulin superfamily member 10"/>
    <property type="match status" value="1"/>
</dbReference>
<dbReference type="FunFam" id="2.60.40.10:FF:001046">
    <property type="entry name" value="Immunoglobulin superfamily member 10"/>
    <property type="match status" value="1"/>
</dbReference>
<dbReference type="FunFam" id="2.60.40.10:FF:001065">
    <property type="entry name" value="Immunoglobulin superfamily member 10"/>
    <property type="match status" value="1"/>
</dbReference>
<dbReference type="FunFam" id="2.60.40.10:FF:001188">
    <property type="entry name" value="Immunoglobulin superfamily member 10"/>
    <property type="match status" value="1"/>
</dbReference>
<dbReference type="FunFam" id="2.60.40.10:FF:001224">
    <property type="entry name" value="Immunoglobulin superfamily member 10"/>
    <property type="match status" value="1"/>
</dbReference>
<dbReference type="FunFam" id="2.60.40.10:FF:001262">
    <property type="entry name" value="Immunoglobulin superfamily member 10"/>
    <property type="match status" value="1"/>
</dbReference>
<dbReference type="FunFam" id="2.60.40.10:FF:001373">
    <property type="entry name" value="Immunoglobulin superfamily member 10"/>
    <property type="match status" value="1"/>
</dbReference>
<dbReference type="FunFam" id="3.80.10.10:FF:000103">
    <property type="entry name" value="Immunoglobulin superfamily member 10"/>
    <property type="match status" value="1"/>
</dbReference>
<dbReference type="FunFam" id="3.80.10.10:FF:000227">
    <property type="entry name" value="Immunoglobulin superfamily member 10"/>
    <property type="match status" value="1"/>
</dbReference>
<dbReference type="FunFam" id="2.60.40.10:FF:000537">
    <property type="entry name" value="immunoglobulin superfamily member 10"/>
    <property type="match status" value="1"/>
</dbReference>
<dbReference type="FunFam" id="2.60.40.10:FF:000925">
    <property type="entry name" value="immunoglobulin superfamily member 10"/>
    <property type="match status" value="1"/>
</dbReference>
<dbReference type="FunFam" id="2.60.40.10:FF:001187">
    <property type="entry name" value="immunoglobulin superfamily member 10"/>
    <property type="match status" value="1"/>
</dbReference>
<dbReference type="FunFam" id="2.60.40.10:FF:001323">
    <property type="entry name" value="immunoglobulin superfamily member 10"/>
    <property type="match status" value="1"/>
</dbReference>
<dbReference type="Gene3D" id="2.60.40.10">
    <property type="entry name" value="Immunoglobulins"/>
    <property type="match status" value="12"/>
</dbReference>
<dbReference type="Gene3D" id="3.80.10.10">
    <property type="entry name" value="Ribonuclease Inhibitor"/>
    <property type="match status" value="2"/>
</dbReference>
<dbReference type="InterPro" id="IPR000483">
    <property type="entry name" value="Cys-rich_flank_reg_C"/>
</dbReference>
<dbReference type="InterPro" id="IPR007110">
    <property type="entry name" value="Ig-like_dom"/>
</dbReference>
<dbReference type="InterPro" id="IPR036179">
    <property type="entry name" value="Ig-like_dom_sf"/>
</dbReference>
<dbReference type="InterPro" id="IPR013783">
    <property type="entry name" value="Ig-like_fold"/>
</dbReference>
<dbReference type="InterPro" id="IPR013098">
    <property type="entry name" value="Ig_I-set"/>
</dbReference>
<dbReference type="InterPro" id="IPR003599">
    <property type="entry name" value="Ig_sub"/>
</dbReference>
<dbReference type="InterPro" id="IPR003598">
    <property type="entry name" value="Ig_sub2"/>
</dbReference>
<dbReference type="InterPro" id="IPR013106">
    <property type="entry name" value="Ig_V-set"/>
</dbReference>
<dbReference type="InterPro" id="IPR001611">
    <property type="entry name" value="Leu-rich_rpt"/>
</dbReference>
<dbReference type="InterPro" id="IPR003591">
    <property type="entry name" value="Leu-rich_rpt_typical-subtyp"/>
</dbReference>
<dbReference type="InterPro" id="IPR050467">
    <property type="entry name" value="LRFN"/>
</dbReference>
<dbReference type="InterPro" id="IPR032675">
    <property type="entry name" value="LRR_dom_sf"/>
</dbReference>
<dbReference type="InterPro" id="IPR000372">
    <property type="entry name" value="LRRNT"/>
</dbReference>
<dbReference type="PANTHER" id="PTHR45842:SF12">
    <property type="entry name" value="KEKKON 5, ISOFORM A"/>
    <property type="match status" value="1"/>
</dbReference>
<dbReference type="PANTHER" id="PTHR45842">
    <property type="entry name" value="SYNAPTIC ADHESION-LIKE MOLECULE SALM"/>
    <property type="match status" value="1"/>
</dbReference>
<dbReference type="Pfam" id="PF07679">
    <property type="entry name" value="I-set"/>
    <property type="match status" value="6"/>
</dbReference>
<dbReference type="Pfam" id="PF13927">
    <property type="entry name" value="Ig_3"/>
    <property type="match status" value="6"/>
</dbReference>
<dbReference type="Pfam" id="PF13855">
    <property type="entry name" value="LRR_8"/>
    <property type="match status" value="1"/>
</dbReference>
<dbReference type="PRINTS" id="PR01832">
    <property type="entry name" value="VEGFRECEPTOR"/>
</dbReference>
<dbReference type="SMART" id="SM00409">
    <property type="entry name" value="IG"/>
    <property type="match status" value="12"/>
</dbReference>
<dbReference type="SMART" id="SM00408">
    <property type="entry name" value="IGc2"/>
    <property type="match status" value="12"/>
</dbReference>
<dbReference type="SMART" id="SM00406">
    <property type="entry name" value="IGv"/>
    <property type="match status" value="6"/>
</dbReference>
<dbReference type="SMART" id="SM00369">
    <property type="entry name" value="LRR_TYP"/>
    <property type="match status" value="6"/>
</dbReference>
<dbReference type="SMART" id="SM00082">
    <property type="entry name" value="LRRCT"/>
    <property type="match status" value="1"/>
</dbReference>
<dbReference type="SMART" id="SM00013">
    <property type="entry name" value="LRRNT"/>
    <property type="match status" value="1"/>
</dbReference>
<dbReference type="SUPFAM" id="SSF48726">
    <property type="entry name" value="Immunoglobulin"/>
    <property type="match status" value="12"/>
</dbReference>
<dbReference type="SUPFAM" id="SSF52058">
    <property type="entry name" value="L domain-like"/>
    <property type="match status" value="1"/>
</dbReference>
<dbReference type="PROSITE" id="PS50835">
    <property type="entry name" value="IG_LIKE"/>
    <property type="match status" value="12"/>
</dbReference>
<dbReference type="PROSITE" id="PS51450">
    <property type="entry name" value="LRR"/>
    <property type="match status" value="7"/>
</dbReference>
<proteinExistence type="evidence at transcript level"/>
<evidence type="ECO:0000250" key="1">
    <source>
        <dbReference type="UniProtKB" id="Q6WRH9"/>
    </source>
</evidence>
<evidence type="ECO:0000250" key="2">
    <source>
        <dbReference type="UniProtKB" id="Q6WRI0"/>
    </source>
</evidence>
<evidence type="ECO:0000255" key="3"/>
<evidence type="ECO:0000255" key="4">
    <source>
        <dbReference type="PROSITE-ProRule" id="PRU00114"/>
    </source>
</evidence>
<evidence type="ECO:0000256" key="5">
    <source>
        <dbReference type="SAM" id="MobiDB-lite"/>
    </source>
</evidence>
<evidence type="ECO:0000269" key="6">
    <source>
    </source>
</evidence>
<evidence type="ECO:0000305" key="7"/>
<accession>Q3V1M1</accession>
<accession>Q3UPM4</accession>
<feature type="signal peptide" evidence="3">
    <location>
        <begin position="1"/>
        <end position="25"/>
    </location>
</feature>
<feature type="chain" id="PRO_0000286818" description="Immunoglobulin superfamily member 10">
    <location>
        <begin position="26"/>
        <end position="2594"/>
    </location>
</feature>
<feature type="domain" description="LRRNT">
    <location>
        <begin position="29"/>
        <end position="56"/>
    </location>
</feature>
<feature type="repeat" description="LRR 1">
    <location>
        <begin position="58"/>
        <end position="79"/>
    </location>
</feature>
<feature type="repeat" description="LRR 2">
    <location>
        <begin position="82"/>
        <end position="103"/>
    </location>
</feature>
<feature type="repeat" description="LRR 3">
    <location>
        <begin position="106"/>
        <end position="127"/>
    </location>
</feature>
<feature type="repeat" description="LRR 4">
    <location>
        <begin position="130"/>
        <end position="151"/>
    </location>
</feature>
<feature type="repeat" description="LRR 5">
    <location>
        <begin position="154"/>
        <end position="175"/>
    </location>
</feature>
<feature type="repeat" description="LRR 6">
    <location>
        <begin position="186"/>
        <end position="207"/>
    </location>
</feature>
<feature type="domain" description="LRRCT">
    <location>
        <begin position="219"/>
        <end position="281"/>
    </location>
</feature>
<feature type="domain" description="Ig-like C2-type 1">
    <location>
        <begin position="461"/>
        <end position="567"/>
    </location>
</feature>
<feature type="domain" description="Ig-like C2-type 2">
    <location>
        <begin position="571"/>
        <end position="661"/>
    </location>
</feature>
<feature type="domain" description="Ig-like C2-type 3">
    <location>
        <begin position="1619"/>
        <end position="1710"/>
    </location>
</feature>
<feature type="repeat" description="LRR 11">
    <location>
        <begin position="1658"/>
        <end position="1681"/>
    </location>
</feature>
<feature type="domain" description="Ig-like C2-type 4">
    <location>
        <begin position="1715"/>
        <end position="1807"/>
    </location>
</feature>
<feature type="domain" description="Ig-like C2-type 5">
    <location>
        <begin position="1812"/>
        <end position="1901"/>
    </location>
</feature>
<feature type="domain" description="Ig-like C2-type 6">
    <location>
        <begin position="1912"/>
        <end position="2005"/>
    </location>
</feature>
<feature type="domain" description="Ig-like C2-type 7">
    <location>
        <begin position="2008"/>
        <end position="2106"/>
    </location>
</feature>
<feature type="domain" description="Ig-like C2-type 8">
    <location>
        <begin position="2112"/>
        <end position="2200"/>
    </location>
</feature>
<feature type="domain" description="Ig-like C2-type 9">
    <location>
        <begin position="2205"/>
        <end position="2302"/>
    </location>
</feature>
<feature type="domain" description="Ig-like C2-type 10">
    <location>
        <begin position="2308"/>
        <end position="2398"/>
    </location>
</feature>
<feature type="domain" description="Ig-like C2-type 11">
    <location>
        <begin position="2403"/>
        <end position="2493"/>
    </location>
</feature>
<feature type="domain" description="Ig-like C2-type 12">
    <location>
        <begin position="2499"/>
        <end position="2592"/>
    </location>
</feature>
<feature type="region of interest" description="Disordered" evidence="5">
    <location>
        <begin position="670"/>
        <end position="725"/>
    </location>
</feature>
<feature type="region of interest" description="Disordered" evidence="5">
    <location>
        <begin position="963"/>
        <end position="1008"/>
    </location>
</feature>
<feature type="region of interest" description="Disordered" evidence="5">
    <location>
        <begin position="1228"/>
        <end position="1251"/>
    </location>
</feature>
<feature type="region of interest" description="Disordered" evidence="5">
    <location>
        <begin position="1333"/>
        <end position="1364"/>
    </location>
</feature>
<feature type="region of interest" description="Disordered" evidence="5">
    <location>
        <begin position="1428"/>
        <end position="1457"/>
    </location>
</feature>
<feature type="compositionally biased region" description="Basic and acidic residues" evidence="5">
    <location>
        <begin position="670"/>
        <end position="685"/>
    </location>
</feature>
<feature type="compositionally biased region" description="Basic residues" evidence="5">
    <location>
        <begin position="715"/>
        <end position="725"/>
    </location>
</feature>
<feature type="compositionally biased region" description="Basic and acidic residues" evidence="5">
    <location>
        <begin position="972"/>
        <end position="984"/>
    </location>
</feature>
<feature type="compositionally biased region" description="Polar residues" evidence="5">
    <location>
        <begin position="985"/>
        <end position="1003"/>
    </location>
</feature>
<feature type="compositionally biased region" description="Basic and acidic residues" evidence="5">
    <location>
        <begin position="1333"/>
        <end position="1342"/>
    </location>
</feature>
<feature type="compositionally biased region" description="Polar residues" evidence="5">
    <location>
        <begin position="1355"/>
        <end position="1364"/>
    </location>
</feature>
<feature type="modified residue" description="Phosphotyrosine" evidence="1">
    <location>
        <position position="2574"/>
    </location>
</feature>
<feature type="glycosylation site" description="N-linked (GlcNAc...) asparagine" evidence="3">
    <location>
        <position position="439"/>
    </location>
</feature>
<feature type="glycosylation site" description="N-linked (GlcNAc...) asparagine" evidence="3">
    <location>
        <position position="627"/>
    </location>
</feature>
<feature type="glycosylation site" description="N-linked (GlcNAc...) asparagine" evidence="3">
    <location>
        <position position="1044"/>
    </location>
</feature>
<feature type="glycosylation site" description="N-linked (GlcNAc...) asparagine" evidence="3">
    <location>
        <position position="1676"/>
    </location>
</feature>
<feature type="glycosylation site" description="N-linked (GlcNAc...) asparagine" evidence="3">
    <location>
        <position position="1780"/>
    </location>
</feature>
<feature type="glycosylation site" description="N-linked (GlcNAc...) asparagine" evidence="3">
    <location>
        <position position="1870"/>
    </location>
</feature>
<feature type="glycosylation site" description="N-linked (GlcNAc...) asparagine" evidence="3">
    <location>
        <position position="1933"/>
    </location>
</feature>
<feature type="glycosylation site" description="N-linked (GlcNAc...) asparagine" evidence="3">
    <location>
        <position position="2072"/>
    </location>
</feature>
<feature type="glycosylation site" description="N-linked (GlcNAc...) asparagine" evidence="3">
    <location>
        <position position="2364"/>
    </location>
</feature>
<feature type="disulfide bond" evidence="4">
    <location>
        <begin position="497"/>
        <end position="551"/>
    </location>
</feature>
<feature type="disulfide bond" evidence="4">
    <location>
        <begin position="595"/>
        <end position="645"/>
    </location>
</feature>
<feature type="disulfide bond" evidence="4">
    <location>
        <begin position="1641"/>
        <end position="1694"/>
    </location>
</feature>
<feature type="disulfide bond" evidence="4">
    <location>
        <begin position="1738"/>
        <end position="1791"/>
    </location>
</feature>
<feature type="disulfide bond" evidence="4">
    <location>
        <begin position="1835"/>
        <end position="1888"/>
    </location>
</feature>
<feature type="disulfide bond" evidence="4">
    <location>
        <begin position="1934"/>
        <end position="1987"/>
    </location>
</feature>
<feature type="disulfide bond" evidence="4">
    <location>
        <begin position="2031"/>
        <end position="2090"/>
    </location>
</feature>
<feature type="disulfide bond" evidence="4">
    <location>
        <begin position="2134"/>
        <end position="2184"/>
    </location>
</feature>
<feature type="disulfide bond" evidence="4">
    <location>
        <begin position="2232"/>
        <end position="2284"/>
    </location>
</feature>
<feature type="disulfide bond" evidence="4">
    <location>
        <begin position="2330"/>
        <end position="2382"/>
    </location>
</feature>
<feature type="disulfide bond" evidence="4">
    <location>
        <begin position="2425"/>
        <end position="2477"/>
    </location>
</feature>
<feature type="disulfide bond" evidence="4">
    <location>
        <begin position="2521"/>
        <end position="2576"/>
    </location>
</feature>
<feature type="sequence conflict" description="In Ref. 2; BAE25371." evidence="7" ref="2">
    <original>Y</original>
    <variation>C</variation>
    <location>
        <position position="150"/>
    </location>
</feature>
<name>IGS10_MOUSE</name>
<organism>
    <name type="scientific">Mus musculus</name>
    <name type="common">Mouse</name>
    <dbReference type="NCBI Taxonomy" id="10090"/>
    <lineage>
        <taxon>Eukaryota</taxon>
        <taxon>Metazoa</taxon>
        <taxon>Chordata</taxon>
        <taxon>Craniata</taxon>
        <taxon>Vertebrata</taxon>
        <taxon>Euteleostomi</taxon>
        <taxon>Mammalia</taxon>
        <taxon>Eutheria</taxon>
        <taxon>Euarchontoglires</taxon>
        <taxon>Glires</taxon>
        <taxon>Rodentia</taxon>
        <taxon>Myomorpha</taxon>
        <taxon>Muroidea</taxon>
        <taxon>Muridae</taxon>
        <taxon>Murinae</taxon>
        <taxon>Mus</taxon>
        <taxon>Mus</taxon>
    </lineage>
</organism>
<protein>
    <recommendedName>
        <fullName>Immunoglobulin superfamily member 10</fullName>
        <shortName>IgSF10</shortName>
    </recommendedName>
</protein>
<keyword id="KW-1015">Disulfide bond</keyword>
<keyword id="KW-0325">Glycoprotein</keyword>
<keyword id="KW-0393">Immunoglobulin domain</keyword>
<keyword id="KW-0433">Leucine-rich repeat</keyword>
<keyword id="KW-0597">Phosphoprotein</keyword>
<keyword id="KW-1185">Reference proteome</keyword>
<keyword id="KW-0677">Repeat</keyword>
<keyword id="KW-0964">Secreted</keyword>
<keyword id="KW-0732">Signal</keyword>